<comment type="function">
    <text>Catalyzes the cyclization of the ubiquitous isoprenoid intermediate geranylgeranyl diphosphate to taxa-4,11-diene, the parent olefin with a taxane skeleton.</text>
</comment>
<comment type="catalytic activity">
    <reaction>
        <text>(2E,6E,10E)-geranylgeranyl diphosphate = taxa-4(5),11(12)-diene + diphosphate</text>
        <dbReference type="Rhea" id="RHEA:20912"/>
        <dbReference type="ChEBI" id="CHEBI:30037"/>
        <dbReference type="ChEBI" id="CHEBI:33019"/>
        <dbReference type="ChEBI" id="CHEBI:58756"/>
        <dbReference type="EC" id="4.2.3.17"/>
    </reaction>
</comment>
<comment type="cofactor">
    <cofactor evidence="1">
        <name>Mg(2+)</name>
        <dbReference type="ChEBI" id="CHEBI:18420"/>
    </cofactor>
    <text evidence="1">Binds 3 Mg(2+) ions per subunit.</text>
</comment>
<comment type="pathway">
    <text>Alkaloid biosynthesis; taxol biosynthesis; taxa-4(20),11-dien-5alpha-ol from geranylgeranyl diphosphate: step 1/2.</text>
</comment>
<comment type="domain">
    <text>The Asp-Asp-Xaa-Xaa-Asp/Glu (DDXXD/E) motif is important for the catalytic activity, presumably through binding to Mg(2+).</text>
</comment>
<comment type="similarity">
    <text evidence="3">Belongs to the terpene synthase family.</text>
</comment>
<sequence length="862" mass="98070">MAQLSFNAALKMNALGNKAIHDPTNCRAKSEGQMMWVCSKSGRTRVKMSRGSGGPGPVVMMSSSTGTSKVVSETSSTIVDDIPRLSANYHGDLWHHNVIQTLETPFRESSTYQERADELVVKIKDMFNALGDGDISPSAYDTAWVARVATISSDGSEKPRFPQALNWVFNNQLQDGSWGIESHFSLCDRLLNTTNSVIALSVWKTGHSQVEQGTEFIAENLRLLNEEDELSPDFEIIFPALLQKAKALGINLPYDLPFIKYLSTTREARLTDVSAAADNIPANMLNALEGLEEVMDWKKIMRFQSKDGSFLSSPASTACVLMNTGDEKCFTFLNNLLVKFGGCVPCMYSIDLLERLSLVDNIEHLGIGRHFKQEIKVALDYVYRHWSERGIGWGRDSLVPDLNTTALGLRTLRTHGYDVSSDVLNNFKDENGRFFSSAGQTHVELRSVVILFRASDLAFPDEGAMDDARKFAEPYLRDALATKISTNTKLFKEIEYVVEYPWHMSIPRSEARSYIDSYDDDYVWERKTLYRMPSLSNSKCLELAKLDFNIVQSLHQEELKLLTRWWKESGMADINFTRHRVAEVYFSSATFEPEYSATRIAFTKIGCLQVLFDDMADIFATLDELKSFTEGVKRWDTSLLHEIPECMQTCFKVWFKLIEEVNNDVVKVQGRDMLAHIRKPWELYFNCYVQEREWLDAGYIPTFEEYLKTYAISVGLGPCTLQPILLMGELVKDDVVEKVHYPSNMFELVSLSWRLTNDTKTYQAEKARGQQASGIACYMKDNLGATEEDAIKHICRVVDRALKEASFEYFKPSNDIPMGCKSFIFNLRLCVQIFYKFIDGYGIANEEIKDYIRKVYIDPIQV</sequence>
<organism>
    <name type="scientific">Taxus chinensis</name>
    <name type="common">Chinese yew</name>
    <name type="synonym">Taxus wallichiana var. chinensis</name>
    <dbReference type="NCBI Taxonomy" id="29808"/>
    <lineage>
        <taxon>Eukaryota</taxon>
        <taxon>Viridiplantae</taxon>
        <taxon>Streptophyta</taxon>
        <taxon>Embryophyta</taxon>
        <taxon>Tracheophyta</taxon>
        <taxon>Spermatophyta</taxon>
        <taxon>Pinopsida</taxon>
        <taxon>Pinidae</taxon>
        <taxon>Conifers II</taxon>
        <taxon>Cupressales</taxon>
        <taxon>Taxaceae</taxon>
        <taxon>Taxus</taxon>
    </lineage>
</organism>
<feature type="chain" id="PRO_0000186451" description="Taxadiene synthase">
    <location>
        <begin position="1"/>
        <end position="862"/>
    </location>
</feature>
<feature type="region of interest" description="Disordered" evidence="2">
    <location>
        <begin position="45"/>
        <end position="66"/>
    </location>
</feature>
<feature type="short sequence motif" description="DDXXD motif">
    <location>
        <begin position="613"/>
        <end position="617"/>
    </location>
</feature>
<feature type="binding site" evidence="1">
    <location>
        <position position="613"/>
    </location>
    <ligand>
        <name>Mg(2+)</name>
        <dbReference type="ChEBI" id="CHEBI:18420"/>
        <label>1</label>
    </ligand>
</feature>
<feature type="binding site" evidence="1">
    <location>
        <position position="613"/>
    </location>
    <ligand>
        <name>Mg(2+)</name>
        <dbReference type="ChEBI" id="CHEBI:18420"/>
        <label>2</label>
    </ligand>
</feature>
<feature type="binding site" evidence="1">
    <location>
        <position position="617"/>
    </location>
    <ligand>
        <name>Mg(2+)</name>
        <dbReference type="ChEBI" id="CHEBI:18420"/>
        <label>1</label>
    </ligand>
</feature>
<feature type="binding site" evidence="1">
    <location>
        <position position="617"/>
    </location>
    <ligand>
        <name>Mg(2+)</name>
        <dbReference type="ChEBI" id="CHEBI:18420"/>
        <label>2</label>
    </ligand>
</feature>
<feature type="binding site" evidence="1">
    <location>
        <position position="757"/>
    </location>
    <ligand>
        <name>Mg(2+)</name>
        <dbReference type="ChEBI" id="CHEBI:18420"/>
        <label>3</label>
    </ligand>
</feature>
<feature type="binding site" evidence="1">
    <location>
        <position position="761"/>
    </location>
    <ligand>
        <name>Mg(2+)</name>
        <dbReference type="ChEBI" id="CHEBI:18420"/>
        <label>3</label>
    </ligand>
</feature>
<feature type="binding site" evidence="1">
    <location>
        <position position="765"/>
    </location>
    <ligand>
        <name>Mg(2+)</name>
        <dbReference type="ChEBI" id="CHEBI:18420"/>
        <label>3</label>
    </ligand>
</feature>
<keyword id="KW-0456">Lyase</keyword>
<keyword id="KW-0460">Magnesium</keyword>
<keyword id="KW-0479">Metal-binding</keyword>
<keyword id="KW-0876">Taxol biosynthesis</keyword>
<gene>
    <name type="primary">TDC1</name>
</gene>
<reference key="1">
    <citation type="submission" date="2000-08" db="EMBL/GenBank/DDBJ databases">
        <title>Cloning, expression, and characterization of taxadiene synthase, a diteroene cyclase from Taxus chinensis.</title>
        <authorList>
            <person name="Wang W."/>
            <person name="Shi Q."/>
            <person name="Ouyang T."/>
            <person name="Zhu P."/>
            <person name="Cheng K."/>
        </authorList>
    </citation>
    <scope>NUCLEOTIDE SEQUENCE [MRNA]</scope>
    <source>
        <tissue>Callus</tissue>
    </source>
</reference>
<evidence type="ECO:0000250" key="1"/>
<evidence type="ECO:0000256" key="2">
    <source>
        <dbReference type="SAM" id="MobiDB-lite"/>
    </source>
</evidence>
<evidence type="ECO:0000305" key="3"/>
<accession>Q9FT37</accession>
<protein>
    <recommendedName>
        <fullName>Taxadiene synthase</fullName>
        <ecNumber>4.2.3.17</ecNumber>
    </recommendedName>
    <alternativeName>
        <fullName>Taxa-4(5),11(12)-diene synthase</fullName>
    </alternativeName>
</protein>
<proteinExistence type="evidence at transcript level"/>
<dbReference type="EC" id="4.2.3.17"/>
<dbReference type="EMBL" id="AY007207">
    <property type="protein sequence ID" value="AAG02257.1"/>
    <property type="molecule type" value="mRNA"/>
</dbReference>
<dbReference type="SMR" id="Q9FT37"/>
<dbReference type="BioCyc" id="MetaCyc:MONOMER-14814"/>
<dbReference type="BRENDA" id="4.2.3.17">
    <property type="organism ID" value="9720"/>
</dbReference>
<dbReference type="UniPathway" id="UPA00842">
    <property type="reaction ID" value="UER00806"/>
</dbReference>
<dbReference type="GO" id="GO:0000287">
    <property type="term" value="F:magnesium ion binding"/>
    <property type="evidence" value="ECO:0007669"/>
    <property type="project" value="InterPro"/>
</dbReference>
<dbReference type="GO" id="GO:0050553">
    <property type="term" value="F:taxadiene synthase activity"/>
    <property type="evidence" value="ECO:0007669"/>
    <property type="project" value="UniProtKB-EC"/>
</dbReference>
<dbReference type="GO" id="GO:0010333">
    <property type="term" value="F:terpene synthase activity"/>
    <property type="evidence" value="ECO:0007669"/>
    <property type="project" value="InterPro"/>
</dbReference>
<dbReference type="GO" id="GO:0042617">
    <property type="term" value="P:paclitaxel biosynthetic process"/>
    <property type="evidence" value="ECO:0007669"/>
    <property type="project" value="UniProtKB-UniPathway"/>
</dbReference>
<dbReference type="CDD" id="cd00684">
    <property type="entry name" value="Terpene_cyclase_plant_C1"/>
    <property type="match status" value="1"/>
</dbReference>
<dbReference type="FunFam" id="1.50.10.130:FF:000002">
    <property type="entry name" value="Ent-copalyl diphosphate synthase, chloroplastic"/>
    <property type="match status" value="1"/>
</dbReference>
<dbReference type="FunFam" id="1.10.600.10:FF:000005">
    <property type="entry name" value="Ent-kaur-16-ene synthase, chloroplastic"/>
    <property type="match status" value="1"/>
</dbReference>
<dbReference type="Gene3D" id="1.50.10.160">
    <property type="match status" value="1"/>
</dbReference>
<dbReference type="Gene3D" id="1.10.600.10">
    <property type="entry name" value="Farnesyl Diphosphate Synthase"/>
    <property type="match status" value="1"/>
</dbReference>
<dbReference type="Gene3D" id="1.50.10.130">
    <property type="entry name" value="Terpene synthase, N-terminal domain"/>
    <property type="match status" value="1"/>
</dbReference>
<dbReference type="InterPro" id="IPR008949">
    <property type="entry name" value="Isoprenoid_synthase_dom_sf"/>
</dbReference>
<dbReference type="InterPro" id="IPR034741">
    <property type="entry name" value="Terpene_cyclase-like_1_C"/>
</dbReference>
<dbReference type="InterPro" id="IPR044814">
    <property type="entry name" value="Terpene_cyclase_plant_C1"/>
</dbReference>
<dbReference type="InterPro" id="IPR001906">
    <property type="entry name" value="Terpene_synth_N"/>
</dbReference>
<dbReference type="InterPro" id="IPR036965">
    <property type="entry name" value="Terpene_synth_N_sf"/>
</dbReference>
<dbReference type="InterPro" id="IPR050148">
    <property type="entry name" value="Terpene_synthase-like"/>
</dbReference>
<dbReference type="InterPro" id="IPR005630">
    <property type="entry name" value="Terpene_synthase_metal-bd"/>
</dbReference>
<dbReference type="InterPro" id="IPR008930">
    <property type="entry name" value="Terpenoid_cyclase/PrenylTrfase"/>
</dbReference>
<dbReference type="PANTHER" id="PTHR31739:SF25">
    <property type="entry name" value="(E,E)-GERANYLLINALOOL SYNTHASE"/>
    <property type="match status" value="1"/>
</dbReference>
<dbReference type="PANTHER" id="PTHR31739">
    <property type="entry name" value="ENT-COPALYL DIPHOSPHATE SYNTHASE, CHLOROPLASTIC"/>
    <property type="match status" value="1"/>
</dbReference>
<dbReference type="Pfam" id="PF01397">
    <property type="entry name" value="Terpene_synth"/>
    <property type="match status" value="1"/>
</dbReference>
<dbReference type="Pfam" id="PF03936">
    <property type="entry name" value="Terpene_synth_C"/>
    <property type="match status" value="1"/>
</dbReference>
<dbReference type="SFLD" id="SFLDS00005">
    <property type="entry name" value="Isoprenoid_Synthase_Type_I"/>
    <property type="match status" value="1"/>
</dbReference>
<dbReference type="SFLD" id="SFLDG01019">
    <property type="entry name" value="Terpene_Cyclase_Like_1_C_Termi"/>
    <property type="match status" value="1"/>
</dbReference>
<dbReference type="SFLD" id="SFLDG01014">
    <property type="entry name" value="Terpene_Cyclase_Like_1_N-term"/>
    <property type="match status" value="1"/>
</dbReference>
<dbReference type="SUPFAM" id="SSF48239">
    <property type="entry name" value="Terpenoid cyclases/Protein prenyltransferases"/>
    <property type="match status" value="2"/>
</dbReference>
<dbReference type="SUPFAM" id="SSF48576">
    <property type="entry name" value="Terpenoid synthases"/>
    <property type="match status" value="1"/>
</dbReference>
<name>TASY_TAXCH</name>